<dbReference type="EMBL" id="CP000926">
    <property type="protein sequence ID" value="ABY96420.1"/>
    <property type="molecule type" value="Genomic_DNA"/>
</dbReference>
<dbReference type="RefSeq" id="WP_003255451.1">
    <property type="nucleotide sequence ID" value="NC_010322.1"/>
</dbReference>
<dbReference type="SMR" id="B0KK92"/>
<dbReference type="GeneID" id="97166005"/>
<dbReference type="KEGG" id="ppg:PputGB1_0509"/>
<dbReference type="eggNOG" id="COG0203">
    <property type="taxonomic scope" value="Bacteria"/>
</dbReference>
<dbReference type="HOGENOM" id="CLU_074407_2_0_6"/>
<dbReference type="Proteomes" id="UP000002157">
    <property type="component" value="Chromosome"/>
</dbReference>
<dbReference type="GO" id="GO:0022625">
    <property type="term" value="C:cytosolic large ribosomal subunit"/>
    <property type="evidence" value="ECO:0007669"/>
    <property type="project" value="TreeGrafter"/>
</dbReference>
<dbReference type="GO" id="GO:0003735">
    <property type="term" value="F:structural constituent of ribosome"/>
    <property type="evidence" value="ECO:0007669"/>
    <property type="project" value="InterPro"/>
</dbReference>
<dbReference type="GO" id="GO:0006412">
    <property type="term" value="P:translation"/>
    <property type="evidence" value="ECO:0007669"/>
    <property type="project" value="UniProtKB-UniRule"/>
</dbReference>
<dbReference type="FunFam" id="3.90.1030.10:FF:000001">
    <property type="entry name" value="50S ribosomal protein L17"/>
    <property type="match status" value="1"/>
</dbReference>
<dbReference type="Gene3D" id="3.90.1030.10">
    <property type="entry name" value="Ribosomal protein L17"/>
    <property type="match status" value="1"/>
</dbReference>
<dbReference type="HAMAP" id="MF_01368">
    <property type="entry name" value="Ribosomal_bL17"/>
    <property type="match status" value="1"/>
</dbReference>
<dbReference type="InterPro" id="IPR000456">
    <property type="entry name" value="Ribosomal_bL17"/>
</dbReference>
<dbReference type="InterPro" id="IPR047859">
    <property type="entry name" value="Ribosomal_bL17_CS"/>
</dbReference>
<dbReference type="InterPro" id="IPR036373">
    <property type="entry name" value="Ribosomal_bL17_sf"/>
</dbReference>
<dbReference type="NCBIfam" id="TIGR00059">
    <property type="entry name" value="L17"/>
    <property type="match status" value="1"/>
</dbReference>
<dbReference type="PANTHER" id="PTHR14413:SF16">
    <property type="entry name" value="LARGE RIBOSOMAL SUBUNIT PROTEIN BL17M"/>
    <property type="match status" value="1"/>
</dbReference>
<dbReference type="PANTHER" id="PTHR14413">
    <property type="entry name" value="RIBOSOMAL PROTEIN L17"/>
    <property type="match status" value="1"/>
</dbReference>
<dbReference type="Pfam" id="PF01196">
    <property type="entry name" value="Ribosomal_L17"/>
    <property type="match status" value="1"/>
</dbReference>
<dbReference type="SUPFAM" id="SSF64263">
    <property type="entry name" value="Prokaryotic ribosomal protein L17"/>
    <property type="match status" value="1"/>
</dbReference>
<dbReference type="PROSITE" id="PS01167">
    <property type="entry name" value="RIBOSOMAL_L17"/>
    <property type="match status" value="1"/>
</dbReference>
<name>RL17_PSEPG</name>
<evidence type="ECO:0000255" key="1">
    <source>
        <dbReference type="HAMAP-Rule" id="MF_01368"/>
    </source>
</evidence>
<evidence type="ECO:0000305" key="2"/>
<gene>
    <name evidence="1" type="primary">rplQ</name>
    <name type="ordered locus">PputGB1_0509</name>
</gene>
<feature type="chain" id="PRO_1000087187" description="Large ribosomal subunit protein bL17">
    <location>
        <begin position="1"/>
        <end position="128"/>
    </location>
</feature>
<sequence>MRHRKSGRHLSRTSSHRKAMFQNMAVSLIEHELIKTTLPKAKELRRVAEPLITLAKEDSVANRRLAFDRTRSKSAVGKLFNDLGKRYATRQGGYLRILKCGFRAGDNAPMAYVELVDRPVGGAVEAAE</sequence>
<keyword id="KW-0687">Ribonucleoprotein</keyword>
<keyword id="KW-0689">Ribosomal protein</keyword>
<comment type="subunit">
    <text evidence="1">Part of the 50S ribosomal subunit. Contacts protein L32.</text>
</comment>
<comment type="similarity">
    <text evidence="1">Belongs to the bacterial ribosomal protein bL17 family.</text>
</comment>
<protein>
    <recommendedName>
        <fullName evidence="1">Large ribosomal subunit protein bL17</fullName>
    </recommendedName>
    <alternativeName>
        <fullName evidence="2">50S ribosomal protein L17</fullName>
    </alternativeName>
</protein>
<organism>
    <name type="scientific">Pseudomonas putida (strain GB-1)</name>
    <dbReference type="NCBI Taxonomy" id="76869"/>
    <lineage>
        <taxon>Bacteria</taxon>
        <taxon>Pseudomonadati</taxon>
        <taxon>Pseudomonadota</taxon>
        <taxon>Gammaproteobacteria</taxon>
        <taxon>Pseudomonadales</taxon>
        <taxon>Pseudomonadaceae</taxon>
        <taxon>Pseudomonas</taxon>
    </lineage>
</organism>
<accession>B0KK92</accession>
<proteinExistence type="inferred from homology"/>
<reference key="1">
    <citation type="submission" date="2008-01" db="EMBL/GenBank/DDBJ databases">
        <title>Complete sequence of Pseudomonas putida GB-1.</title>
        <authorList>
            <consortium name="US DOE Joint Genome Institute"/>
            <person name="Copeland A."/>
            <person name="Lucas S."/>
            <person name="Lapidus A."/>
            <person name="Barry K."/>
            <person name="Glavina del Rio T."/>
            <person name="Dalin E."/>
            <person name="Tice H."/>
            <person name="Pitluck S."/>
            <person name="Bruce D."/>
            <person name="Goodwin L."/>
            <person name="Chertkov O."/>
            <person name="Brettin T."/>
            <person name="Detter J.C."/>
            <person name="Han C."/>
            <person name="Kuske C.R."/>
            <person name="Schmutz J."/>
            <person name="Larimer F."/>
            <person name="Land M."/>
            <person name="Hauser L."/>
            <person name="Kyrpides N."/>
            <person name="Kim E."/>
            <person name="McCarthy J.K."/>
            <person name="Richardson P."/>
        </authorList>
    </citation>
    <scope>NUCLEOTIDE SEQUENCE [LARGE SCALE GENOMIC DNA]</scope>
    <source>
        <strain>GB-1</strain>
    </source>
</reference>